<proteinExistence type="evidence at protein level"/>
<comment type="function">
    <text evidence="3 4 6 7 8">Manganese-independent peroxidase that is able to convert a large number of compounds, but its physiological substrate is not known. In addition to classic peroxidase substrates (e.g. 2,6-dimethoxyphenol), oxidizes dyes such as Reactive Blue 5 and Reactive Black 5.</text>
</comment>
<comment type="catalytic activity">
    <reaction evidence="3 4 6 7 8">
        <text>Reactive Blue 5 + 2 H2O2 = 2,2'-disulfonyl azobenzene + 3-[(4-amino-6-chloro-1,3,5-triazin-2-yl)amino]benzenesulfonate + phthalate + 2 H2O + 2 H(+)</text>
        <dbReference type="Rhea" id="RHEA:28086"/>
        <dbReference type="ChEBI" id="CHEBI:15377"/>
        <dbReference type="ChEBI" id="CHEBI:15378"/>
        <dbReference type="ChEBI" id="CHEBI:16240"/>
        <dbReference type="ChEBI" id="CHEBI:17563"/>
        <dbReference type="ChEBI" id="CHEBI:63950"/>
        <dbReference type="ChEBI" id="CHEBI:63955"/>
        <dbReference type="ChEBI" id="CHEBI:64278"/>
        <dbReference type="EC" id="1.11.1.19"/>
    </reaction>
</comment>
<comment type="catalytic activity">
    <reaction evidence="3 4 6 7 8">
        <text>2 a phenolic donor + H2O2 = 2 a phenolic radical donor + 2 H2O</text>
        <dbReference type="Rhea" id="RHEA:56136"/>
        <dbReference type="ChEBI" id="CHEBI:15377"/>
        <dbReference type="ChEBI" id="CHEBI:16240"/>
        <dbReference type="ChEBI" id="CHEBI:139520"/>
        <dbReference type="ChEBI" id="CHEBI:139521"/>
        <dbReference type="EC" id="1.11.1.7"/>
    </reaction>
</comment>
<comment type="cofactor">
    <cofactor evidence="5 7 8 9">
        <name>heme b</name>
        <dbReference type="ChEBI" id="CHEBI:60344"/>
    </cofactor>
    <text evidence="5 7 8 9">Binds 1 heme b (iron(II)-protoporphyrin IX) group non-covalently.</text>
</comment>
<comment type="activity regulation">
    <text evidence="8">Inhibited by imidazole.</text>
</comment>
<comment type="biophysicochemical properties">
    <absorption>
        <max>405 nm</max>
        <text>Dye-decolorizing peroxidase AauDyP1. The value for Dye-decolorizing peroxidase AauDyP2 is 406 nm.</text>
    </absorption>
    <kinetics>
        <KM evidence="3">20 uM for 2,2'-azino-bis(3-ethylbenzthiazoline-6-sulphonic acid) (ABTS) (Dye-decolorizing peroxidase AauDyP1, at pH 4.5)</KM>
        <KM evidence="6">283 uM for ABTS (Dye-decolorizing peroxidase AauDyP1, at pH 3)</KM>
        <KM evidence="3">20 uM for ABTS (Dye-decolorizing peroxidase AauDyP2, at pH 4.5)</KM>
        <KM evidence="3">10 uM for H(2)O(2) (Dye-decolorizing peroxidase AauDyP1)</KM>
        <KM evidence="3">5 uM for H(2)O(2) (Dye-decolorizing peroxidase AauDyP2)</KM>
        <KM evidence="3">23 uM for Reactive Blue 5 (Dye-decolorizing peroxidase AauDyP1, at pH 3)</KM>
        <KM evidence="7">3.1 uM for Reactive Blue 5 (Dye-decolorizing peroxidase AauDyP1, at pH 3)</KM>
        <KM evidence="3">15 uM for Reactive Blue 5 (Dye-decolorizing peroxidase AauDyP2, at pH 3)</KM>
        <KM evidence="3">27 uM for 2,6-Dimethoxyphenol (DMP)(Dye-decolorizing peroxidase AauDyP1, at pH 4.5)</KM>
        <KM evidence="8">27 uM for DMP (Dye-decolorizing peroxidase AauDyP1, at pH 5)</KM>
        <KM evidence="3">23 uM for DMP (Dye-decolorizing peroxidase AauDyP2, at pH 4.5)</KM>
        <Vmax evidence="3">134.0 umol/min/mg enzyme toward Reactive Blue 5 (Dye-decolorizing peroxidase AauDyP1, at pH 3)</Vmax>
        <Vmax evidence="3">375.0 umol/min/mg enzyme toward Reactive Blue 5 (Dye-decolorizing peroxidase AauDyP2, at pH 3)</Vmax>
        <Vmax evidence="3">331.0 umol/min/mg enzyme toward ABTS (Dye-decolorizing peroxidase AauDyP1, at pH 4.5)</Vmax>
        <Vmax evidence="3">471.0 umol/min/mg enzyme toward ABTS (Dye-decolorizing peroxidase AauDyP2, at pH 4.5)</Vmax>
        <Vmax evidence="3">105.0 umol/min/mg enzyme toward DMP (Dye-decolorizing peroxidase AauDyP1, at pH 4.5)</Vmax>
        <Vmax evidence="3">130.0 umol/min/mg enzyme toward DMP (Dye-decolorizing peroxidase AauDyP2, at pH 4.5)</Vmax>
        <Vmax evidence="3">315.0 umol/min/mg enzyme toward H(2)O(2) (Dye-decolorizing peroxidase AauDyP1, at pH 4.5)</Vmax>
        <Vmax evidence="3">348.0 umol/min/mg enzyme toward H(2)O(2) (Dye-decolorizing peroxidase AauDyP2, at pH 4.5)</Vmax>
    </kinetics>
    <phDependence>
        <text evidence="3 4 6">Optimum pH is 4.5 for oxidation of 2,6-dimethoxyphenol (PubMed:23111597). Retains 100% activity after incubation at pH 2.5 for 4 hours (PubMed:19756587, PubMed:23111597, PubMed:25153532). Retains &gt;60% activity after incubation at pH 2-11 at 4 degrees Celsius (PubMed:25153532). Retains &gt;60% activity after incubation at pH 3-9 at room temperature (PubMed:25153532).</text>
    </phDependence>
    <temperatureDependence>
        <text evidence="6">Retains &gt;80% activity after incubation at temperatures up to 60 degrees Celsius for 10 minutes. Retains 50% activity after incubation at 65.5 degrees Celsius for 10 minutes. Activity is lost after incubation at 70 degrees Celsius for 10 minutes.</text>
    </temperatureDependence>
</comment>
<comment type="subcellular location">
    <subcellularLocation>
        <location evidence="14">Secreted</location>
    </subcellularLocation>
</comment>
<comment type="similarity">
    <text evidence="13">Belongs to the DyP-type peroxidase family.</text>
</comment>
<protein>
    <recommendedName>
        <fullName evidence="12">Dye-decolorizing peroxidase AauDyP1</fullName>
        <ecNumber evidence="3 4 6">1.11.1.19</ecNumber>
        <ecNumber evidence="3 4 6 7 8">1.11.1.7</ecNumber>
    </recommendedName>
    <alternativeName>
        <fullName evidence="11">AjP I</fullName>
    </alternativeName>
    <alternativeName>
        <fullName evidence="11">Manganese-independent peroxidase I</fullName>
    </alternativeName>
    <component>
        <recommendedName>
            <fullName evidence="12">Dye-decolorizing peroxidase AauDyP2</fullName>
            <ecNumber evidence="3 4">1.11.1.19</ecNumber>
            <ecNumber evidence="3 4">1.11.1.7</ecNumber>
        </recommendedName>
        <alternativeName>
            <fullName evidence="11">AjP II</fullName>
        </alternativeName>
        <alternativeName>
            <fullName evidence="11">Manganese-independent peroxidase II</fullName>
        </alternativeName>
    </component>
</protein>
<reference evidence="13" key="1">
    <citation type="journal article" date="2013" name="Appl. Microbiol. Biotechnol.">
        <title>Substrate oxidation by dye-decolorizing peroxidases (DyPs) from wood- and litter-degrading agaricomycetes compared to other fungal and plant heme-peroxidases.</title>
        <authorList>
            <person name="Liers C."/>
            <person name="Pecyna M.J."/>
            <person name="Kellner H."/>
            <person name="Worrich A."/>
            <person name="Zorn H."/>
            <person name="Steffen K.T."/>
            <person name="Hofrichter M."/>
            <person name="Ullrich R."/>
        </authorList>
    </citation>
    <scope>NUCLEOTIDE SEQUENCE [MRNA]</scope>
    <scope>PROTEIN SEQUENCE OF 62-75; 171-185 AND 449-467</scope>
    <scope>FUNCTION</scope>
    <scope>CATALYTIC ACTIVITY</scope>
    <scope>BIOPHYSICOCHEMICAL PROPERTIES</scope>
    <source>
        <strain evidence="12">DSMZ 11326</strain>
    </source>
</reference>
<reference evidence="13" key="2">
    <citation type="journal article" date="2010" name="Appl. Microbiol. Biotechnol.">
        <title>DyP-like peroxidases of the jelly fungus Auricularia auricula-judae oxidize nonphenolic lignin model compounds and high-redox potential dyes.</title>
        <authorList>
            <person name="Liers C."/>
            <person name="Bobeth C."/>
            <person name="Pecyna M."/>
            <person name="Ullrich R."/>
            <person name="Hofrichter M."/>
        </authorList>
    </citation>
    <scope>FUNCTION</scope>
    <scope>CATALYTIC ACTIVITY</scope>
    <scope>BIOPHYSICOCHEMICAL PROPERTIES</scope>
</reference>
<reference evidence="13" key="3">
    <citation type="journal article" date="2014" name="Protein Expr. Purif.">
        <title>Heterologous expression and physicochemical characterization of a fungal dye-decolorizing peroxidase from Auricularia auricula-judae.</title>
        <authorList>
            <person name="Linde D."/>
            <person name="Coscolin C."/>
            <person name="Liers C."/>
            <person name="Hofrichter M."/>
            <person name="Martinez A.T."/>
            <person name="Ruiz-Duenas F.J."/>
        </authorList>
    </citation>
    <scope>FUNCTION</scope>
    <scope>CATALYTIC ACTIVITY</scope>
    <scope>BIOPHYSICOCHEMICAL PROPERTIES</scope>
</reference>
<reference evidence="16" key="4">
    <citation type="journal article" date="2013" name="J. Biol. Chem.">
        <title>First crystal structure of a fungal high-redox potential dye-decolorizing peroxidase: substrate interaction sites and long-range electron transfer.</title>
        <authorList>
            <person name="Strittmatter E."/>
            <person name="Liers C."/>
            <person name="Ullrich R."/>
            <person name="Wachter S."/>
            <person name="Hofrichter M."/>
            <person name="Plattner D.A."/>
            <person name="Piontek K."/>
        </authorList>
    </citation>
    <scope>X-RAY CRYSTALLOGRAPHY (2.10 ANGSTROMS) OF 62-509 IN COMPLEX WITH HEME</scope>
    <scope>COFACTOR</scope>
    <scope>ACTIVE SITE</scope>
    <scope>GLYCOSYLATION AT ASN-343; ASN-410 AND ASN-476</scope>
</reference>
<reference evidence="17" key="5">
    <citation type="journal article" date="2015" name="Arch. Biochem. Biophys.">
        <title>The toolbox of Auricularia auricula-judae dye-decolorizing peroxidase - Identification of three new potential substrate-interaction sites.</title>
        <authorList>
            <person name="Strittmatter E."/>
            <person name="Serrer K."/>
            <person name="Liers C."/>
            <person name="Ullrich R."/>
            <person name="Hofrichter M."/>
            <person name="Piontek K."/>
            <person name="Schleicher E."/>
            <person name="Plattner D.A."/>
        </authorList>
    </citation>
    <scope>X-RAY CRYSTALLOGRAPHY (2.10 ANGSTROMS) OF 64-509 IN COMPLEX WITH HEME</scope>
    <scope>FUNCTION</scope>
    <scope>CATALYTIC ACTIVITY</scope>
    <scope>ACTIVITY REGULATION</scope>
    <scope>BIOPHYSICOCHEMICAL PROPERTIES</scope>
    <scope>GLYCOSYLATION AT ASN-343; ASN-410 AND ASN-476</scope>
</reference>
<reference evidence="21 22 23" key="6">
    <citation type="journal article" date="2015" name="Biochem. J.">
        <title>Catalytic surface radical in dye-decolorizing peroxidase: a computational, spectroscopic and site-directed mutagenesis study.</title>
        <authorList>
            <person name="Linde D."/>
            <person name="Pogni R."/>
            <person name="Canellas M."/>
            <person name="Lucas F."/>
            <person name="Guallar V."/>
            <person name="Baratto M.C."/>
            <person name="Sinicropi A."/>
            <person name="Saez-Jimenez V."/>
            <person name="Coscolin C."/>
            <person name="Romero A."/>
            <person name="Medrano F.J."/>
            <person name="Ruiz-Duenas F.J."/>
            <person name="Martinez A.T."/>
        </authorList>
    </citation>
    <scope>X-RAY CRYSTALLOGRAPHY (1.05 ANGSTROMS) OF 62-509 IN COMPLEX WITH HEME</scope>
    <scope>FUNCTION</scope>
    <scope>CATALYTIC ACTIVITY</scope>
    <scope>BIOPHYSICOCHEMICAL PROPERTIES</scope>
    <scope>MUTAGENESIS OF TYR-208; GLY-230; TYR-398 AND TRP-438</scope>
</reference>
<reference evidence="26 27" key="7">
    <citation type="journal article" date="2016" name="Catal. Sci. Technol.">
        <title>Asymmetric sulfoxidation by engineering the heme pocket of a dye-decolorizing peroxidase.</title>
        <authorList>
            <person name="Linde D."/>
            <person name="Canellas M."/>
            <person name="Davo-Siguero I."/>
            <person name="Romero A."/>
            <person name="Lucas F."/>
            <person name="Ruiz-Duenas F.J."/>
            <person name="Guallar V."/>
            <person name="Martinez A.T."/>
        </authorList>
    </citation>
    <scope>X-RAY CRYSTALLOGRAPHY (1.11 ANGSTROMS) OF 64-509 IN COMPLEX WITH HEME</scope>
    <scope>MUTAGENESIS OF ASP-229; ARG-393; LEU-418 AND PHE-420</scope>
</reference>
<reference evidence="24 25" key="8">
    <citation type="submission" date="2015-01" db="PDB data bank">
        <title>Crystallographic Trapping of a Covalently Modified Heme in a Dye-Decolorizing Peroxidase.</title>
        <authorList>
            <person name="Strittmatter E."/>
            <person name="Piontek K."/>
            <person name="Plattner D.A."/>
        </authorList>
    </citation>
    <scope>X-RAY CRYSTALLOGRAPHY (1.75 ANGSTROMS) OF 64-509 IN COMPLEX WITH HEME</scope>
    <scope>GLYCOSYLATION AT ASN-343; ASN-410 AND ASN-476</scope>
</reference>
<keyword id="KW-0002">3D-structure</keyword>
<keyword id="KW-0903">Direct protein sequencing</keyword>
<keyword id="KW-0325">Glycoprotein</keyword>
<keyword id="KW-0349">Heme</keyword>
<keyword id="KW-0408">Iron</keyword>
<keyword id="KW-0479">Metal-binding</keyword>
<keyword id="KW-0560">Oxidoreductase</keyword>
<keyword id="KW-0575">Peroxidase</keyword>
<keyword id="KW-0964">Secreted</keyword>
<keyword id="KW-0732">Signal</keyword>
<name>DYP_AURAJ</name>
<gene>
    <name evidence="15" type="primary">dyp1</name>
</gene>
<dbReference type="EC" id="1.11.1.19" evidence="3 4 6"/>
<dbReference type="EC" id="1.11.1.7" evidence="3 4 6 7 8"/>
<dbReference type="EMBL" id="JQ650250">
    <property type="protein sequence ID" value="AFJ79723.1"/>
    <property type="molecule type" value="mRNA"/>
</dbReference>
<dbReference type="PDB" id="4AU9">
    <property type="method" value="X-ray"/>
    <property type="resolution" value="2.10 A"/>
    <property type="chains" value="A/B=62-509"/>
</dbReference>
<dbReference type="PDB" id="4UZI">
    <property type="method" value="X-ray"/>
    <property type="resolution" value="2.10 A"/>
    <property type="chains" value="A/B=64-509"/>
</dbReference>
<dbReference type="PDB" id="4W7J">
    <property type="method" value="X-ray"/>
    <property type="resolution" value="1.79 A"/>
    <property type="chains" value="A/B/C/D=62-509"/>
</dbReference>
<dbReference type="PDB" id="4W7K">
    <property type="method" value="X-ray"/>
    <property type="resolution" value="1.05 A"/>
    <property type="chains" value="A/B=62-509"/>
</dbReference>
<dbReference type="PDB" id="4W7L">
    <property type="method" value="X-ray"/>
    <property type="resolution" value="1.05 A"/>
    <property type="chains" value="A/B=62-509"/>
</dbReference>
<dbReference type="PDB" id="4W7M">
    <property type="method" value="X-ray"/>
    <property type="resolution" value="1.15 A"/>
    <property type="chains" value="A/B=62-509"/>
</dbReference>
<dbReference type="PDB" id="4W7N">
    <property type="method" value="X-ray"/>
    <property type="resolution" value="1.40 A"/>
    <property type="chains" value="A/B=62-509"/>
</dbReference>
<dbReference type="PDB" id="4W7O">
    <property type="method" value="X-ray"/>
    <property type="resolution" value="1.20 A"/>
    <property type="chains" value="A=62-509"/>
</dbReference>
<dbReference type="PDB" id="5AG0">
    <property type="method" value="X-ray"/>
    <property type="resolution" value="1.75 A"/>
    <property type="chains" value="A/B=64-509"/>
</dbReference>
<dbReference type="PDB" id="5AG1">
    <property type="method" value="X-ray"/>
    <property type="resolution" value="1.85 A"/>
    <property type="chains" value="A/B=64-509"/>
</dbReference>
<dbReference type="PDB" id="5IKD">
    <property type="method" value="X-ray"/>
    <property type="resolution" value="1.11 A"/>
    <property type="chains" value="A=64-509"/>
</dbReference>
<dbReference type="PDB" id="5IKG">
    <property type="method" value="X-ray"/>
    <property type="resolution" value="1.95 A"/>
    <property type="chains" value="A=65-509"/>
</dbReference>
<dbReference type="PDBsum" id="4AU9"/>
<dbReference type="PDBsum" id="4UZI"/>
<dbReference type="PDBsum" id="4W7J"/>
<dbReference type="PDBsum" id="4W7K"/>
<dbReference type="PDBsum" id="4W7L"/>
<dbReference type="PDBsum" id="4W7M"/>
<dbReference type="PDBsum" id="4W7N"/>
<dbReference type="PDBsum" id="4W7O"/>
<dbReference type="PDBsum" id="5AG0"/>
<dbReference type="PDBsum" id="5AG1"/>
<dbReference type="PDBsum" id="5IKD"/>
<dbReference type="PDBsum" id="5IKG"/>
<dbReference type="SMR" id="I2DBY1"/>
<dbReference type="GlyCosmos" id="I2DBY1">
    <property type="glycosylation" value="4 sites, No reported glycans"/>
</dbReference>
<dbReference type="iPTMnet" id="I2DBY1"/>
<dbReference type="BRENDA" id="1.11.1.19">
    <property type="organism ID" value="12259"/>
</dbReference>
<dbReference type="EvolutionaryTrace" id="I2DBY1"/>
<dbReference type="GO" id="GO:0005829">
    <property type="term" value="C:cytosol"/>
    <property type="evidence" value="ECO:0007669"/>
    <property type="project" value="TreeGrafter"/>
</dbReference>
<dbReference type="GO" id="GO:0005576">
    <property type="term" value="C:extracellular region"/>
    <property type="evidence" value="ECO:0007669"/>
    <property type="project" value="UniProtKB-SubCell"/>
</dbReference>
<dbReference type="GO" id="GO:0020037">
    <property type="term" value="F:heme binding"/>
    <property type="evidence" value="ECO:0000314"/>
    <property type="project" value="UniProtKB"/>
</dbReference>
<dbReference type="GO" id="GO:0140825">
    <property type="term" value="F:lactoperoxidase activity"/>
    <property type="evidence" value="ECO:0007669"/>
    <property type="project" value="UniProtKB-EC"/>
</dbReference>
<dbReference type="GO" id="GO:0046872">
    <property type="term" value="F:metal ion binding"/>
    <property type="evidence" value="ECO:0007669"/>
    <property type="project" value="UniProtKB-KW"/>
</dbReference>
<dbReference type="GO" id="GO:0004601">
    <property type="term" value="F:peroxidase activity"/>
    <property type="evidence" value="ECO:0000314"/>
    <property type="project" value="UniProtKB"/>
</dbReference>
<dbReference type="InterPro" id="IPR011008">
    <property type="entry name" value="Dimeric_a/b-barrel"/>
</dbReference>
<dbReference type="InterPro" id="IPR049509">
    <property type="entry name" value="DyP_N"/>
</dbReference>
<dbReference type="InterPro" id="IPR048328">
    <property type="entry name" value="Dyp_perox_C"/>
</dbReference>
<dbReference type="InterPro" id="IPR006314">
    <property type="entry name" value="Dyp_peroxidase"/>
</dbReference>
<dbReference type="NCBIfam" id="TIGR01413">
    <property type="entry name" value="Dyp_perox_fam"/>
    <property type="match status" value="1"/>
</dbReference>
<dbReference type="PANTHER" id="PTHR30521:SF4">
    <property type="entry name" value="DEFERROCHELATASE"/>
    <property type="match status" value="1"/>
</dbReference>
<dbReference type="PANTHER" id="PTHR30521">
    <property type="entry name" value="DEFERROCHELATASE/PEROXIDASE"/>
    <property type="match status" value="1"/>
</dbReference>
<dbReference type="Pfam" id="PF21105">
    <property type="entry name" value="DyP_N"/>
    <property type="match status" value="1"/>
</dbReference>
<dbReference type="Pfam" id="PF20628">
    <property type="entry name" value="Dyp_perox_C"/>
    <property type="match status" value="1"/>
</dbReference>
<dbReference type="SUPFAM" id="SSF54909">
    <property type="entry name" value="Dimeric alpha+beta barrel"/>
    <property type="match status" value="1"/>
</dbReference>
<dbReference type="PROSITE" id="PS51404">
    <property type="entry name" value="DYP_PEROXIDASE"/>
    <property type="match status" value="1"/>
</dbReference>
<sequence>MRLSPVFVALLSGLLAADLGLARSVAPRVADSPAAVTGTRKTSLLKNVAGLPPVPSAAQVAATSLNTDDIQGDILVGMHKQKQLFYFFAINDPATFKTHLASDIAPVVASVTQLSNVATQPLVALNIAFSNTGLLALGVTDNLGDSLFANGQAKDATSFKESTSSWVPQFAGTGIHGVIILASDTTDLIDQQVASIESTFGSSISKLYSLSASIRPGNEAGHEMFGFLDGIAQPAINGFNTPLPGQNIVDAGVIITGATNDPITRPSWAVGGSFLAFRQLEQLVPEFNKYLLDNAPAGSGSLQARADLLGARMVGRWKSGAPIDLTPTADDPALGADAQRNNNFTYSHAGFDLGSDQSHCPFSAHIRKTRPRADLGGSLTPPNLSAGANSIMRSGIPYGPEVTSAESASNTTTQERGLAFVAYQAQLSQGFHFLQQTWADNANFPPGKTPATVGLDPIIGQNNGQPRVVNGLLPSNSSASLSIPQFVVSHGGEYFFSPPISAIGGRLSA</sequence>
<feature type="signal peptide" evidence="1">
    <location>
        <begin position="1"/>
        <end position="22"/>
    </location>
</feature>
<feature type="propeptide" id="PRO_0000444023" evidence="14">
    <location>
        <begin position="23"/>
        <end position="61"/>
    </location>
</feature>
<feature type="chain" id="PRO_5003657170" description="Dye-decolorizing peroxidase AauDyP1" evidence="5">
    <location>
        <begin position="62"/>
        <end position="509"/>
    </location>
</feature>
<feature type="chain" id="PRO_0000444024" description="Dye-decolorizing peroxidase AauDyP2" evidence="14">
    <location>
        <begin position="171"/>
        <end position="509"/>
    </location>
</feature>
<feature type="active site" description="Proton acceptor" evidence="5">
    <location>
        <position position="229"/>
    </location>
</feature>
<feature type="binding site" description="axial binding residue" evidence="5 7 8 9 10 16 17 18 19 20 21 22 23 24 26 27">
    <location>
        <position position="365"/>
    </location>
    <ligand>
        <name>heme</name>
        <dbReference type="ChEBI" id="CHEBI:30413"/>
    </ligand>
    <ligandPart>
        <name>Fe</name>
        <dbReference type="ChEBI" id="CHEBI:18248"/>
    </ligandPart>
</feature>
<feature type="glycosylation site" description="N-linked (GlcNAc...) asparagine" evidence="5 8 10 16 17 24 25">
    <location>
        <position position="343"/>
    </location>
</feature>
<feature type="glycosylation site" description="N-linked (GlcNAc...) asparagine" evidence="2">
    <location>
        <position position="383"/>
    </location>
</feature>
<feature type="glycosylation site" description="N-linked (GlcNAc...) asparagine" evidence="5 8 10 16 17 24 25">
    <location>
        <position position="410"/>
    </location>
</feature>
<feature type="glycosylation site" description="N-linked (GlcNAc...) asparagine" evidence="5 8 10 16 17 24 25">
    <location>
        <position position="476"/>
    </location>
</feature>
<feature type="mutagenesis site" description="No significant effect on enzyme kinetics; when associated with F-398." evidence="7">
    <original>Y</original>
    <variation>F</variation>
    <location>
        <position position="208"/>
    </location>
</feature>
<feature type="mutagenesis site" description="No significant effect on enzyme kinetics." evidence="7">
    <original>Y</original>
    <variation>S</variation>
    <location>
        <position position="208"/>
    </location>
</feature>
<feature type="mutagenesis site" description="Drastically decreased catalytic efficiency in reducing H(2)O(2)." evidence="9">
    <original>D</original>
    <variation>N</variation>
    <location>
        <position position="229"/>
    </location>
</feature>
<feature type="mutagenesis site" description="Complete loss of activity for ABTS and Reactive Blue 19 but not DMP." evidence="7">
    <original>G</original>
    <variation>L</variation>
    <location>
        <position position="230"/>
    </location>
</feature>
<feature type="mutagenesis site" description="Drastically decreased catalytic efficiency in reducing H(2)O(2)." evidence="9">
    <original>R</original>
    <variation>L</variation>
    <location>
        <position position="393"/>
    </location>
</feature>
<feature type="mutagenesis site" description="No significant effect on enzyme kinetics; when associated with F-208." evidence="7">
    <original>Y</original>
    <variation>F</variation>
    <location>
        <position position="398"/>
    </location>
</feature>
<feature type="mutagenesis site" description="No significant effect on enzyme kinetics." evidence="7">
    <original>Y</original>
    <variation>S</variation>
    <location>
        <position position="398"/>
    </location>
</feature>
<feature type="mutagenesis site" description="Acquires new moderate non-stereoselective sulfoxidase activity (KM=0.6 mM for methyl-phenyl sulfide(MPS)). No activity towards the bigger substrate methyl-p-tolyl sulfide (MTS)." evidence="9">
    <original>L</original>
    <variation>G</variation>
    <location>
        <position position="418"/>
    </location>
</feature>
<feature type="mutagenesis site" description="Acquires new strong stereoselective sulfoxidase activity favoring the S enantiomer (KM=0.37 mM for methyl-phenyl sulfide(MPS), KM=0.13 mM for methyl-p-tolyl sulfide (MTS))." evidence="9">
    <original>F</original>
    <variation>G</variation>
    <location>
        <position position="420"/>
    </location>
</feature>
<feature type="mutagenesis site" description="Does not acquire new sulfoxidase activity." evidence="9">
    <original>F</original>
    <variation>H</variation>
    <location>
        <position position="420"/>
    </location>
</feature>
<feature type="mutagenesis site" description="Does not acquire new sulfoxidase activity." evidence="9">
    <original>F</original>
    <variation>W</variation>
    <location>
        <position position="420"/>
    </location>
</feature>
<feature type="mutagenesis site" description="Complete loss of activity or at least greatly reduced substrate affinity, enzyme activity and catalytic efficiency." evidence="7">
    <original>W</original>
    <variation>S</variation>
    <location>
        <position position="438"/>
    </location>
</feature>
<feature type="helix" evidence="29">
    <location>
        <begin position="67"/>
        <end position="69"/>
    </location>
</feature>
<feature type="helix" evidence="29">
    <location>
        <begin position="72"/>
        <end position="75"/>
    </location>
</feature>
<feature type="strand" evidence="29">
    <location>
        <begin position="81"/>
        <end position="90"/>
    </location>
</feature>
<feature type="helix" evidence="29">
    <location>
        <begin position="93"/>
        <end position="103"/>
    </location>
</feature>
<feature type="helix" evidence="29">
    <location>
        <begin position="105"/>
        <end position="107"/>
    </location>
</feature>
<feature type="helix" evidence="29">
    <location>
        <begin position="111"/>
        <end position="114"/>
    </location>
</feature>
<feature type="helix" evidence="32">
    <location>
        <begin position="117"/>
        <end position="119"/>
    </location>
</feature>
<feature type="strand" evidence="29">
    <location>
        <begin position="122"/>
        <end position="129"/>
    </location>
</feature>
<feature type="helix" evidence="29">
    <location>
        <begin position="131"/>
        <end position="136"/>
    </location>
</feature>
<feature type="helix" evidence="29">
    <location>
        <begin position="146"/>
        <end position="150"/>
    </location>
</feature>
<feature type="helix" evidence="29">
    <location>
        <begin position="152"/>
        <end position="155"/>
    </location>
</feature>
<feature type="helix" evidence="29">
    <location>
        <begin position="156"/>
        <end position="159"/>
    </location>
</feature>
<feature type="helix" evidence="29">
    <location>
        <begin position="163"/>
        <end position="165"/>
    </location>
</feature>
<feature type="helix" evidence="29">
    <location>
        <begin position="168"/>
        <end position="170"/>
    </location>
</feature>
<feature type="strand" evidence="29">
    <location>
        <begin position="171"/>
        <end position="173"/>
    </location>
</feature>
<feature type="strand" evidence="29">
    <location>
        <begin position="177"/>
        <end position="185"/>
    </location>
</feature>
<feature type="helix" evidence="29">
    <location>
        <begin position="186"/>
        <end position="200"/>
    </location>
</feature>
<feature type="helix" evidence="29">
    <location>
        <begin position="201"/>
        <end position="203"/>
    </location>
</feature>
<feature type="strand" evidence="29">
    <location>
        <begin position="204"/>
        <end position="213"/>
    </location>
</feature>
<feature type="helix" evidence="29">
    <location>
        <begin position="217"/>
        <end position="219"/>
    </location>
</feature>
<feature type="turn" evidence="29">
    <location>
        <begin position="237"/>
        <end position="239"/>
    </location>
</feature>
<feature type="strand" evidence="28">
    <location>
        <begin position="248"/>
        <end position="250"/>
    </location>
</feature>
<feature type="helix" evidence="29">
    <location>
        <begin position="251"/>
        <end position="253"/>
    </location>
</feature>
<feature type="helix" evidence="29">
    <location>
        <begin position="267"/>
        <end position="269"/>
    </location>
</feature>
<feature type="strand" evidence="29">
    <location>
        <begin position="273"/>
        <end position="282"/>
    </location>
</feature>
<feature type="helix" evidence="29">
    <location>
        <begin position="284"/>
        <end position="293"/>
    </location>
</feature>
<feature type="strand" evidence="30">
    <location>
        <begin position="298"/>
        <end position="300"/>
    </location>
</feature>
<feature type="helix" evidence="29">
    <location>
        <begin position="302"/>
        <end position="314"/>
    </location>
</feature>
<feature type="turn" evidence="29">
    <location>
        <begin position="323"/>
        <end position="325"/>
    </location>
</feature>
<feature type="strand" evidence="29">
    <location>
        <begin position="326"/>
        <end position="329"/>
    </location>
</feature>
<feature type="helix" evidence="29">
    <location>
        <begin position="332"/>
        <end position="336"/>
    </location>
</feature>
<feature type="turn" evidence="29">
    <location>
        <begin position="338"/>
        <end position="342"/>
    </location>
</feature>
<feature type="turn" evidence="29">
    <location>
        <begin position="353"/>
        <end position="355"/>
    </location>
</feature>
<feature type="strand" evidence="29">
    <location>
        <begin position="358"/>
        <end position="360"/>
    </location>
</feature>
<feature type="helix" evidence="29">
    <location>
        <begin position="365"/>
        <end position="369"/>
    </location>
</feature>
<feature type="helix" evidence="29">
    <location>
        <begin position="372"/>
        <end position="375"/>
    </location>
</feature>
<feature type="strand" evidence="29">
    <location>
        <begin position="379"/>
        <end position="381"/>
    </location>
</feature>
<feature type="helix" evidence="29">
    <location>
        <begin position="387"/>
        <end position="389"/>
    </location>
</feature>
<feature type="strand" evidence="29">
    <location>
        <begin position="396"/>
        <end position="399"/>
    </location>
</feature>
<feature type="helix" evidence="29">
    <location>
        <begin position="404"/>
        <end position="409"/>
    </location>
</feature>
<feature type="strand" evidence="29">
    <location>
        <begin position="417"/>
        <end position="425"/>
    </location>
</feature>
<feature type="turn" evidence="29">
    <location>
        <begin position="427"/>
        <end position="430"/>
    </location>
</feature>
<feature type="helix" evidence="29">
    <location>
        <begin position="431"/>
        <end position="436"/>
    </location>
</feature>
<feature type="turn" evidence="29">
    <location>
        <begin position="437"/>
        <end position="440"/>
    </location>
</feature>
<feature type="strand" evidence="31">
    <location>
        <begin position="445"/>
        <end position="447"/>
    </location>
</feature>
<feature type="strand" evidence="29">
    <location>
        <begin position="449"/>
        <end position="451"/>
    </location>
</feature>
<feature type="turn" evidence="29">
    <location>
        <begin position="457"/>
        <end position="459"/>
    </location>
</feature>
<feature type="strand" evidence="29">
    <location>
        <begin position="467"/>
        <end position="471"/>
    </location>
</feature>
<feature type="strand" evidence="29">
    <location>
        <begin position="480"/>
        <end position="483"/>
    </location>
</feature>
<feature type="strand" evidence="29">
    <location>
        <begin position="486"/>
        <end position="497"/>
    </location>
</feature>
<feature type="helix" evidence="29">
    <location>
        <begin position="500"/>
        <end position="504"/>
    </location>
</feature>
<feature type="helix" evidence="29">
    <location>
        <begin position="506"/>
        <end position="508"/>
    </location>
</feature>
<organism evidence="15">
    <name type="scientific">Auricularia auricula-judae</name>
    <name type="common">Judas ear fungus</name>
    <name type="synonym">Tremella auricula-judae</name>
    <dbReference type="NCBI Taxonomy" id="29892"/>
    <lineage>
        <taxon>Eukaryota</taxon>
        <taxon>Fungi</taxon>
        <taxon>Dikarya</taxon>
        <taxon>Basidiomycota</taxon>
        <taxon>Agaricomycotina</taxon>
        <taxon>Agaricomycetes</taxon>
        <taxon>Auriculariales</taxon>
        <taxon>Auriculariaceae</taxon>
        <taxon>Auricularia</taxon>
    </lineage>
</organism>
<evidence type="ECO:0000255" key="1"/>
<evidence type="ECO:0000255" key="2">
    <source>
        <dbReference type="PROSITE-ProRule" id="PRU00498"/>
    </source>
</evidence>
<evidence type="ECO:0000269" key="3">
    <source>
    </source>
</evidence>
<evidence type="ECO:0000269" key="4">
    <source>
    </source>
</evidence>
<evidence type="ECO:0000269" key="5">
    <source>
    </source>
</evidence>
<evidence type="ECO:0000269" key="6">
    <source>
    </source>
</evidence>
<evidence type="ECO:0000269" key="7">
    <source>
    </source>
</evidence>
<evidence type="ECO:0000269" key="8">
    <source>
    </source>
</evidence>
<evidence type="ECO:0000269" key="9">
    <source ref="7"/>
</evidence>
<evidence type="ECO:0000269" key="10">
    <source ref="8"/>
</evidence>
<evidence type="ECO:0000303" key="11">
    <source>
    </source>
</evidence>
<evidence type="ECO:0000303" key="12">
    <source>
    </source>
</evidence>
<evidence type="ECO:0000305" key="13"/>
<evidence type="ECO:0000305" key="14">
    <source>
    </source>
</evidence>
<evidence type="ECO:0000312" key="15">
    <source>
        <dbReference type="EMBL" id="AFJ79723.1"/>
    </source>
</evidence>
<evidence type="ECO:0007744" key="16">
    <source>
        <dbReference type="PDB" id="4AU9"/>
    </source>
</evidence>
<evidence type="ECO:0007744" key="17">
    <source>
        <dbReference type="PDB" id="4UZI"/>
    </source>
</evidence>
<evidence type="ECO:0007744" key="18">
    <source>
        <dbReference type="PDB" id="4W7J"/>
    </source>
</evidence>
<evidence type="ECO:0007744" key="19">
    <source>
        <dbReference type="PDB" id="4W7K"/>
    </source>
</evidence>
<evidence type="ECO:0007744" key="20">
    <source>
        <dbReference type="PDB" id="4W7L"/>
    </source>
</evidence>
<evidence type="ECO:0007744" key="21">
    <source>
        <dbReference type="PDB" id="4W7M"/>
    </source>
</evidence>
<evidence type="ECO:0007744" key="22">
    <source>
        <dbReference type="PDB" id="4W7N"/>
    </source>
</evidence>
<evidence type="ECO:0007744" key="23">
    <source>
        <dbReference type="PDB" id="4W7O"/>
    </source>
</evidence>
<evidence type="ECO:0007744" key="24">
    <source>
        <dbReference type="PDB" id="5AG0"/>
    </source>
</evidence>
<evidence type="ECO:0007744" key="25">
    <source>
        <dbReference type="PDB" id="5AG1"/>
    </source>
</evidence>
<evidence type="ECO:0007744" key="26">
    <source>
        <dbReference type="PDB" id="5IKD"/>
    </source>
</evidence>
<evidence type="ECO:0007744" key="27">
    <source>
        <dbReference type="PDB" id="5IKG"/>
    </source>
</evidence>
<evidence type="ECO:0007829" key="28">
    <source>
        <dbReference type="PDB" id="4AU9"/>
    </source>
</evidence>
<evidence type="ECO:0007829" key="29">
    <source>
        <dbReference type="PDB" id="4W7K"/>
    </source>
</evidence>
<evidence type="ECO:0007829" key="30">
    <source>
        <dbReference type="PDB" id="4W7L"/>
    </source>
</evidence>
<evidence type="ECO:0007829" key="31">
    <source>
        <dbReference type="PDB" id="4W7O"/>
    </source>
</evidence>
<evidence type="ECO:0007829" key="32">
    <source>
        <dbReference type="PDB" id="5IKD"/>
    </source>
</evidence>
<accession>I2DBY1</accession>